<accession>Q11WK5</accession>
<dbReference type="EC" id="3.1.3.5" evidence="1"/>
<dbReference type="EMBL" id="CP000383">
    <property type="protein sequence ID" value="ABG58211.1"/>
    <property type="molecule type" value="Genomic_DNA"/>
</dbReference>
<dbReference type="RefSeq" id="WP_011584326.1">
    <property type="nucleotide sequence ID" value="NC_008255.1"/>
</dbReference>
<dbReference type="SMR" id="Q11WK5"/>
<dbReference type="STRING" id="269798.CHU_0932"/>
<dbReference type="KEGG" id="chu:CHU_0932"/>
<dbReference type="eggNOG" id="COG0496">
    <property type="taxonomic scope" value="Bacteria"/>
</dbReference>
<dbReference type="HOGENOM" id="CLU_045192_1_0_10"/>
<dbReference type="OrthoDB" id="9780815at2"/>
<dbReference type="Proteomes" id="UP000001822">
    <property type="component" value="Chromosome"/>
</dbReference>
<dbReference type="GO" id="GO:0005737">
    <property type="term" value="C:cytoplasm"/>
    <property type="evidence" value="ECO:0007669"/>
    <property type="project" value="UniProtKB-SubCell"/>
</dbReference>
<dbReference type="GO" id="GO:0008254">
    <property type="term" value="F:3'-nucleotidase activity"/>
    <property type="evidence" value="ECO:0007669"/>
    <property type="project" value="TreeGrafter"/>
</dbReference>
<dbReference type="GO" id="GO:0008253">
    <property type="term" value="F:5'-nucleotidase activity"/>
    <property type="evidence" value="ECO:0007669"/>
    <property type="project" value="UniProtKB-UniRule"/>
</dbReference>
<dbReference type="GO" id="GO:0004309">
    <property type="term" value="F:exopolyphosphatase activity"/>
    <property type="evidence" value="ECO:0007669"/>
    <property type="project" value="TreeGrafter"/>
</dbReference>
<dbReference type="GO" id="GO:0046872">
    <property type="term" value="F:metal ion binding"/>
    <property type="evidence" value="ECO:0007669"/>
    <property type="project" value="UniProtKB-UniRule"/>
</dbReference>
<dbReference type="GO" id="GO:0000166">
    <property type="term" value="F:nucleotide binding"/>
    <property type="evidence" value="ECO:0007669"/>
    <property type="project" value="UniProtKB-KW"/>
</dbReference>
<dbReference type="FunFam" id="3.40.1210.10:FF:000001">
    <property type="entry name" value="5'/3'-nucleotidase SurE"/>
    <property type="match status" value="1"/>
</dbReference>
<dbReference type="Gene3D" id="3.40.1210.10">
    <property type="entry name" value="Survival protein SurE-like phosphatase/nucleotidase"/>
    <property type="match status" value="1"/>
</dbReference>
<dbReference type="HAMAP" id="MF_00060">
    <property type="entry name" value="SurE"/>
    <property type="match status" value="1"/>
</dbReference>
<dbReference type="InterPro" id="IPR030048">
    <property type="entry name" value="SurE"/>
</dbReference>
<dbReference type="InterPro" id="IPR002828">
    <property type="entry name" value="SurE-like_Pase/nucleotidase"/>
</dbReference>
<dbReference type="InterPro" id="IPR036523">
    <property type="entry name" value="SurE-like_sf"/>
</dbReference>
<dbReference type="NCBIfam" id="NF001490">
    <property type="entry name" value="PRK00346.1-4"/>
    <property type="match status" value="1"/>
</dbReference>
<dbReference type="NCBIfam" id="NF001492">
    <property type="entry name" value="PRK00346.2-2"/>
    <property type="match status" value="1"/>
</dbReference>
<dbReference type="NCBIfam" id="TIGR00087">
    <property type="entry name" value="surE"/>
    <property type="match status" value="1"/>
</dbReference>
<dbReference type="PANTHER" id="PTHR30457">
    <property type="entry name" value="5'-NUCLEOTIDASE SURE"/>
    <property type="match status" value="1"/>
</dbReference>
<dbReference type="PANTHER" id="PTHR30457:SF12">
    <property type="entry name" value="5'_3'-NUCLEOTIDASE SURE"/>
    <property type="match status" value="1"/>
</dbReference>
<dbReference type="Pfam" id="PF01975">
    <property type="entry name" value="SurE"/>
    <property type="match status" value="1"/>
</dbReference>
<dbReference type="SUPFAM" id="SSF64167">
    <property type="entry name" value="SurE-like"/>
    <property type="match status" value="1"/>
</dbReference>
<comment type="function">
    <text evidence="1">Nucleotidase that shows phosphatase activity on nucleoside 5'-monophosphates.</text>
</comment>
<comment type="catalytic activity">
    <reaction evidence="1">
        <text>a ribonucleoside 5'-phosphate + H2O = a ribonucleoside + phosphate</text>
        <dbReference type="Rhea" id="RHEA:12484"/>
        <dbReference type="ChEBI" id="CHEBI:15377"/>
        <dbReference type="ChEBI" id="CHEBI:18254"/>
        <dbReference type="ChEBI" id="CHEBI:43474"/>
        <dbReference type="ChEBI" id="CHEBI:58043"/>
        <dbReference type="EC" id="3.1.3.5"/>
    </reaction>
</comment>
<comment type="cofactor">
    <cofactor evidence="1">
        <name>a divalent metal cation</name>
        <dbReference type="ChEBI" id="CHEBI:60240"/>
    </cofactor>
    <text evidence="1">Binds 1 divalent metal cation per subunit.</text>
</comment>
<comment type="subcellular location">
    <subcellularLocation>
        <location evidence="1">Cytoplasm</location>
    </subcellularLocation>
</comment>
<comment type="similarity">
    <text evidence="1">Belongs to the SurE nucleotidase family.</text>
</comment>
<name>SURE_CYTH3</name>
<evidence type="ECO:0000255" key="1">
    <source>
        <dbReference type="HAMAP-Rule" id="MF_00060"/>
    </source>
</evidence>
<sequence>MSKPLILVCNDDGIFSVGIRTLIEVMSELGEVVVVAPDSPQSGMGHAITIGNTLRLEASDLFPGIVAYECSGTPADCVKLAKHHVLKGRKPDLVVSGINHGSNSSISVLYSGTMSAAIEAALEGLPAIGFSLCDYNAHADFSHVKAFVKQIASEVLTNGIAKGITLNVNFPAVINAPLKGIKICRQAHARWEEKFDERFDPYGRRYFWMAGSFENKDAGEDTDEWALANGYVSVVPCSYDLTAHQLLGQLNRDWKFIHE</sequence>
<keyword id="KW-0963">Cytoplasm</keyword>
<keyword id="KW-0378">Hydrolase</keyword>
<keyword id="KW-0479">Metal-binding</keyword>
<keyword id="KW-0547">Nucleotide-binding</keyword>
<keyword id="KW-1185">Reference proteome</keyword>
<gene>
    <name evidence="1" type="primary">surE</name>
    <name type="ordered locus">CHU_0932</name>
</gene>
<proteinExistence type="inferred from homology"/>
<organism>
    <name type="scientific">Cytophaga hutchinsonii (strain ATCC 33406 / DSM 1761 / CIP 103989 / NBRC 15051 / NCIMB 9469 / D465)</name>
    <dbReference type="NCBI Taxonomy" id="269798"/>
    <lineage>
        <taxon>Bacteria</taxon>
        <taxon>Pseudomonadati</taxon>
        <taxon>Bacteroidota</taxon>
        <taxon>Cytophagia</taxon>
        <taxon>Cytophagales</taxon>
        <taxon>Cytophagaceae</taxon>
        <taxon>Cytophaga</taxon>
    </lineage>
</organism>
<reference key="1">
    <citation type="journal article" date="2007" name="Appl. Environ. Microbiol.">
        <title>Genome sequence of the cellulolytic gliding bacterium Cytophaga hutchinsonii.</title>
        <authorList>
            <person name="Xie G."/>
            <person name="Bruce D.C."/>
            <person name="Challacombe J.F."/>
            <person name="Chertkov O."/>
            <person name="Detter J.C."/>
            <person name="Gilna P."/>
            <person name="Han C.S."/>
            <person name="Lucas S."/>
            <person name="Misra M."/>
            <person name="Myers G.L."/>
            <person name="Richardson P."/>
            <person name="Tapia R."/>
            <person name="Thayer N."/>
            <person name="Thompson L.S."/>
            <person name="Brettin T.S."/>
            <person name="Henrissat B."/>
            <person name="Wilson D.B."/>
            <person name="McBride M.J."/>
        </authorList>
    </citation>
    <scope>NUCLEOTIDE SEQUENCE [LARGE SCALE GENOMIC DNA]</scope>
    <source>
        <strain>ATCC 33406 / DSM 1761 / JCM 20678 / CIP 103989 / IAM 12607 / NBRC 15051 / NCIMB 9469 / D465</strain>
    </source>
</reference>
<feature type="chain" id="PRO_0000335258" description="5'-nucleotidase SurE">
    <location>
        <begin position="1"/>
        <end position="259"/>
    </location>
</feature>
<feature type="binding site" evidence="1">
    <location>
        <position position="11"/>
    </location>
    <ligand>
        <name>a divalent metal cation</name>
        <dbReference type="ChEBI" id="CHEBI:60240"/>
    </ligand>
</feature>
<feature type="binding site" evidence="1">
    <location>
        <position position="12"/>
    </location>
    <ligand>
        <name>a divalent metal cation</name>
        <dbReference type="ChEBI" id="CHEBI:60240"/>
    </ligand>
</feature>
<feature type="binding site" evidence="1">
    <location>
        <position position="42"/>
    </location>
    <ligand>
        <name>a divalent metal cation</name>
        <dbReference type="ChEBI" id="CHEBI:60240"/>
    </ligand>
</feature>
<feature type="binding site" evidence="1">
    <location>
        <position position="99"/>
    </location>
    <ligand>
        <name>a divalent metal cation</name>
        <dbReference type="ChEBI" id="CHEBI:60240"/>
    </ligand>
</feature>
<protein>
    <recommendedName>
        <fullName evidence="1">5'-nucleotidase SurE</fullName>
        <ecNumber evidence="1">3.1.3.5</ecNumber>
    </recommendedName>
    <alternativeName>
        <fullName evidence="1">Nucleoside 5'-monophosphate phosphohydrolase</fullName>
    </alternativeName>
</protein>